<keyword id="KW-0413">Isomerase</keyword>
<keyword id="KW-1185">Reference proteome</keyword>
<keyword id="KW-0819">tRNA processing</keyword>
<protein>
    <recommendedName>
        <fullName evidence="1">tRNA pseudouridine synthase A 1</fullName>
        <ecNumber evidence="1">5.4.99.12</ecNumber>
    </recommendedName>
    <alternativeName>
        <fullName evidence="1">tRNA pseudouridine(38-40) synthase</fullName>
    </alternativeName>
    <alternativeName>
        <fullName evidence="1">tRNA pseudouridylate synthase I 1</fullName>
    </alternativeName>
    <alternativeName>
        <fullName evidence="1">tRNA-uridine isomerase I 1</fullName>
    </alternativeName>
</protein>
<name>TRUA1_CLOTE</name>
<sequence>MRNLKMILEYDGTRYKGWQKQKKDVLTIQDKIETVLSKMTGEDIQVIGCGRTDAGVHAENYVANFHTNCDFTVDYMLDYLYEFLPEDIVVKTMKDTSERFHARYNVKSKTYVYRINNNKFRSVFNKKYAYHDNEKLNISAMKDAAEFLIGTHDFKSFTRLKSNSKSTIRAIKYINITENQGIISIEVNGNGFLLNMVRIVAGALLEVGKENIKPIDIEKMLNEKKRADASLILPAKGLCLKDIQY</sequence>
<feature type="chain" id="PRO_0000057366" description="tRNA pseudouridine synthase A 1">
    <location>
        <begin position="1"/>
        <end position="245"/>
    </location>
</feature>
<feature type="active site" description="Nucleophile" evidence="1">
    <location>
        <position position="53"/>
    </location>
</feature>
<feature type="binding site" evidence="1">
    <location>
        <position position="111"/>
    </location>
    <ligand>
        <name>substrate</name>
    </ligand>
</feature>
<dbReference type="EC" id="5.4.99.12" evidence="1"/>
<dbReference type="EMBL" id="AE015927">
    <property type="protein sequence ID" value="AAO36369.1"/>
    <property type="molecule type" value="Genomic_DNA"/>
</dbReference>
<dbReference type="RefSeq" id="WP_011100029.1">
    <property type="nucleotide sequence ID" value="NC_004557.1"/>
</dbReference>
<dbReference type="SMR" id="Q893H3"/>
<dbReference type="STRING" id="212717.CTC_01851"/>
<dbReference type="GeneID" id="24253354"/>
<dbReference type="KEGG" id="ctc:CTC_01851"/>
<dbReference type="HOGENOM" id="CLU_014673_0_1_9"/>
<dbReference type="Proteomes" id="UP000001412">
    <property type="component" value="Chromosome"/>
</dbReference>
<dbReference type="GO" id="GO:0003723">
    <property type="term" value="F:RNA binding"/>
    <property type="evidence" value="ECO:0007669"/>
    <property type="project" value="InterPro"/>
</dbReference>
<dbReference type="GO" id="GO:0160147">
    <property type="term" value="F:tRNA pseudouridine(38-40) synthase activity"/>
    <property type="evidence" value="ECO:0007669"/>
    <property type="project" value="UniProtKB-EC"/>
</dbReference>
<dbReference type="GO" id="GO:0031119">
    <property type="term" value="P:tRNA pseudouridine synthesis"/>
    <property type="evidence" value="ECO:0007669"/>
    <property type="project" value="UniProtKB-UniRule"/>
</dbReference>
<dbReference type="CDD" id="cd02570">
    <property type="entry name" value="PseudoU_synth_EcTruA"/>
    <property type="match status" value="1"/>
</dbReference>
<dbReference type="FunFam" id="3.30.70.580:FF:000001">
    <property type="entry name" value="tRNA pseudouridine synthase A"/>
    <property type="match status" value="1"/>
</dbReference>
<dbReference type="Gene3D" id="3.30.70.660">
    <property type="entry name" value="Pseudouridine synthase I, catalytic domain, C-terminal subdomain"/>
    <property type="match status" value="1"/>
</dbReference>
<dbReference type="Gene3D" id="3.30.70.580">
    <property type="entry name" value="Pseudouridine synthase I, catalytic domain, N-terminal subdomain"/>
    <property type="match status" value="1"/>
</dbReference>
<dbReference type="HAMAP" id="MF_00171">
    <property type="entry name" value="TruA"/>
    <property type="match status" value="1"/>
</dbReference>
<dbReference type="InterPro" id="IPR020103">
    <property type="entry name" value="PsdUridine_synth_cat_dom_sf"/>
</dbReference>
<dbReference type="InterPro" id="IPR001406">
    <property type="entry name" value="PsdUridine_synth_TruA"/>
</dbReference>
<dbReference type="InterPro" id="IPR020097">
    <property type="entry name" value="PsdUridine_synth_TruA_a/b_dom"/>
</dbReference>
<dbReference type="InterPro" id="IPR020095">
    <property type="entry name" value="PsdUridine_synth_TruA_C"/>
</dbReference>
<dbReference type="InterPro" id="IPR020094">
    <property type="entry name" value="TruA/RsuA/RluB/E/F_N"/>
</dbReference>
<dbReference type="NCBIfam" id="TIGR00071">
    <property type="entry name" value="hisT_truA"/>
    <property type="match status" value="1"/>
</dbReference>
<dbReference type="PANTHER" id="PTHR11142">
    <property type="entry name" value="PSEUDOURIDYLATE SYNTHASE"/>
    <property type="match status" value="1"/>
</dbReference>
<dbReference type="PANTHER" id="PTHR11142:SF22">
    <property type="entry name" value="TRNA PSEUDOURIDINE SYNTHASE A 2"/>
    <property type="match status" value="1"/>
</dbReference>
<dbReference type="Pfam" id="PF01416">
    <property type="entry name" value="PseudoU_synth_1"/>
    <property type="match status" value="2"/>
</dbReference>
<dbReference type="PIRSF" id="PIRSF001430">
    <property type="entry name" value="tRNA_psdUrid_synth"/>
    <property type="match status" value="1"/>
</dbReference>
<dbReference type="SUPFAM" id="SSF55120">
    <property type="entry name" value="Pseudouridine synthase"/>
    <property type="match status" value="1"/>
</dbReference>
<accession>Q893H3</accession>
<comment type="function">
    <text evidence="1">Formation of pseudouridine at positions 38, 39 and 40 in the anticodon stem and loop of transfer RNAs.</text>
</comment>
<comment type="catalytic activity">
    <reaction evidence="1">
        <text>uridine(38/39/40) in tRNA = pseudouridine(38/39/40) in tRNA</text>
        <dbReference type="Rhea" id="RHEA:22376"/>
        <dbReference type="Rhea" id="RHEA-COMP:10085"/>
        <dbReference type="Rhea" id="RHEA-COMP:10087"/>
        <dbReference type="ChEBI" id="CHEBI:65314"/>
        <dbReference type="ChEBI" id="CHEBI:65315"/>
        <dbReference type="EC" id="5.4.99.12"/>
    </reaction>
</comment>
<comment type="subunit">
    <text evidence="1">Homodimer.</text>
</comment>
<comment type="similarity">
    <text evidence="1">Belongs to the tRNA pseudouridine synthase TruA family.</text>
</comment>
<organism>
    <name type="scientific">Clostridium tetani (strain Massachusetts / E88)</name>
    <dbReference type="NCBI Taxonomy" id="212717"/>
    <lineage>
        <taxon>Bacteria</taxon>
        <taxon>Bacillati</taxon>
        <taxon>Bacillota</taxon>
        <taxon>Clostridia</taxon>
        <taxon>Eubacteriales</taxon>
        <taxon>Clostridiaceae</taxon>
        <taxon>Clostridium</taxon>
    </lineage>
</organism>
<proteinExistence type="inferred from homology"/>
<gene>
    <name evidence="1" type="primary">truA1</name>
    <name type="ordered locus">CTC_01851</name>
</gene>
<evidence type="ECO:0000255" key="1">
    <source>
        <dbReference type="HAMAP-Rule" id="MF_00171"/>
    </source>
</evidence>
<reference key="1">
    <citation type="journal article" date="2003" name="Proc. Natl. Acad. Sci. U.S.A.">
        <title>The genome sequence of Clostridium tetani, the causative agent of tetanus disease.</title>
        <authorList>
            <person name="Brueggemann H."/>
            <person name="Baeumer S."/>
            <person name="Fricke W.F."/>
            <person name="Wiezer A."/>
            <person name="Liesegang H."/>
            <person name="Decker I."/>
            <person name="Herzberg C."/>
            <person name="Martinez-Arias R."/>
            <person name="Merkl R."/>
            <person name="Henne A."/>
            <person name="Gottschalk G."/>
        </authorList>
    </citation>
    <scope>NUCLEOTIDE SEQUENCE [LARGE SCALE GENOMIC DNA]</scope>
    <source>
        <strain>Massachusetts / E88</strain>
    </source>
</reference>